<accession>A4QLE4</accession>
<organism>
    <name type="scientific">Lepidium virginicum</name>
    <name type="common">Virginia pepperweed</name>
    <dbReference type="NCBI Taxonomy" id="59292"/>
    <lineage>
        <taxon>Eukaryota</taxon>
        <taxon>Viridiplantae</taxon>
        <taxon>Streptophyta</taxon>
        <taxon>Embryophyta</taxon>
        <taxon>Tracheophyta</taxon>
        <taxon>Spermatophyta</taxon>
        <taxon>Magnoliopsida</taxon>
        <taxon>eudicotyledons</taxon>
        <taxon>Gunneridae</taxon>
        <taxon>Pentapetalae</taxon>
        <taxon>rosids</taxon>
        <taxon>malvids</taxon>
        <taxon>Brassicales</taxon>
        <taxon>Brassicaceae</taxon>
        <taxon>Lepidieae</taxon>
        <taxon>Lepidium</taxon>
    </lineage>
</organism>
<sequence>MGQKINPLGFRLGTTQSHHSLWFAQPKKYSEGLEEDKKIRDCIKKYVQKNIRISSGMEGIARIEIQKRIDLIQIIIYMGFPKLLIEDKPRRVEELQMNVQKELNCVNRKLNIAITRISNPYGDPNILAEFIAGQLKNRVSFRKAMKKAIELTEQANTKGIQVQIAGRIDGKEIARVEWIREGRVPLQTIEAKIDYCSYTVRTIYGVLGIKIWIFVDEE</sequence>
<proteinExistence type="inferred from homology"/>
<reference key="1">
    <citation type="submission" date="2007-03" db="EMBL/GenBank/DDBJ databases">
        <title>Sequencing analysis of Lepidium virginicum JO26 chloroplast DNA.</title>
        <authorList>
            <person name="Hosouchi T."/>
            <person name="Tsuruoka H."/>
            <person name="Kotani H."/>
        </authorList>
    </citation>
    <scope>NUCLEOTIDE SEQUENCE [LARGE SCALE GENOMIC DNA]</scope>
</reference>
<protein>
    <recommendedName>
        <fullName evidence="2">Small ribosomal subunit protein uS3c</fullName>
    </recommendedName>
    <alternativeName>
        <fullName>30S ribosomal protein S3, chloroplastic</fullName>
    </alternativeName>
</protein>
<name>RR3_LEPVR</name>
<geneLocation type="chloroplast"/>
<keyword id="KW-0150">Chloroplast</keyword>
<keyword id="KW-0934">Plastid</keyword>
<keyword id="KW-0687">Ribonucleoprotein</keyword>
<keyword id="KW-0689">Ribosomal protein</keyword>
<keyword id="KW-0694">RNA-binding</keyword>
<keyword id="KW-0699">rRNA-binding</keyword>
<gene>
    <name type="primary">rps3</name>
</gene>
<dbReference type="EMBL" id="AP009374">
    <property type="protein sequence ID" value="BAF50499.1"/>
    <property type="molecule type" value="Genomic_DNA"/>
</dbReference>
<dbReference type="RefSeq" id="YP_001123675.1">
    <property type="nucleotide sequence ID" value="NC_009273.1"/>
</dbReference>
<dbReference type="SMR" id="A4QLE4"/>
<dbReference type="GeneID" id="4961965"/>
<dbReference type="GO" id="GO:0009507">
    <property type="term" value="C:chloroplast"/>
    <property type="evidence" value="ECO:0007669"/>
    <property type="project" value="UniProtKB-SubCell"/>
</dbReference>
<dbReference type="GO" id="GO:0022627">
    <property type="term" value="C:cytosolic small ribosomal subunit"/>
    <property type="evidence" value="ECO:0007669"/>
    <property type="project" value="TreeGrafter"/>
</dbReference>
<dbReference type="GO" id="GO:0019843">
    <property type="term" value="F:rRNA binding"/>
    <property type="evidence" value="ECO:0007669"/>
    <property type="project" value="UniProtKB-UniRule"/>
</dbReference>
<dbReference type="GO" id="GO:0003735">
    <property type="term" value="F:structural constituent of ribosome"/>
    <property type="evidence" value="ECO:0007669"/>
    <property type="project" value="InterPro"/>
</dbReference>
<dbReference type="GO" id="GO:0006412">
    <property type="term" value="P:translation"/>
    <property type="evidence" value="ECO:0007669"/>
    <property type="project" value="UniProtKB-UniRule"/>
</dbReference>
<dbReference type="CDD" id="cd02412">
    <property type="entry name" value="KH-II_30S_S3"/>
    <property type="match status" value="1"/>
</dbReference>
<dbReference type="FunFam" id="3.30.1140.32:FF:000003">
    <property type="entry name" value="30S ribosomal protein S3, chloroplastic"/>
    <property type="match status" value="1"/>
</dbReference>
<dbReference type="FunFam" id="3.30.300.20:FF:000008">
    <property type="entry name" value="30S ribosomal protein S3, chloroplastic"/>
    <property type="match status" value="1"/>
</dbReference>
<dbReference type="Gene3D" id="3.30.300.20">
    <property type="match status" value="1"/>
</dbReference>
<dbReference type="Gene3D" id="3.30.1140.32">
    <property type="entry name" value="Ribosomal protein S3, C-terminal domain"/>
    <property type="match status" value="1"/>
</dbReference>
<dbReference type="HAMAP" id="MF_01309_B">
    <property type="entry name" value="Ribosomal_uS3_B"/>
    <property type="match status" value="1"/>
</dbReference>
<dbReference type="InterPro" id="IPR015946">
    <property type="entry name" value="KH_dom-like_a/b"/>
</dbReference>
<dbReference type="InterPro" id="IPR004044">
    <property type="entry name" value="KH_dom_type_2"/>
</dbReference>
<dbReference type="InterPro" id="IPR009019">
    <property type="entry name" value="KH_sf_prok-type"/>
</dbReference>
<dbReference type="InterPro" id="IPR036419">
    <property type="entry name" value="Ribosomal_S3_C_sf"/>
</dbReference>
<dbReference type="InterPro" id="IPR005704">
    <property type="entry name" value="Ribosomal_uS3_bac-typ"/>
</dbReference>
<dbReference type="InterPro" id="IPR001351">
    <property type="entry name" value="Ribosomal_uS3_C"/>
</dbReference>
<dbReference type="InterPro" id="IPR018280">
    <property type="entry name" value="Ribosomal_uS3_CS"/>
</dbReference>
<dbReference type="NCBIfam" id="TIGR01009">
    <property type="entry name" value="rpsC_bact"/>
    <property type="match status" value="1"/>
</dbReference>
<dbReference type="PANTHER" id="PTHR11760">
    <property type="entry name" value="30S/40S RIBOSOMAL PROTEIN S3"/>
    <property type="match status" value="1"/>
</dbReference>
<dbReference type="PANTHER" id="PTHR11760:SF19">
    <property type="entry name" value="SMALL RIBOSOMAL SUBUNIT PROTEIN US3C"/>
    <property type="match status" value="1"/>
</dbReference>
<dbReference type="Pfam" id="PF00189">
    <property type="entry name" value="Ribosomal_S3_C"/>
    <property type="match status" value="1"/>
</dbReference>
<dbReference type="SUPFAM" id="SSF54814">
    <property type="entry name" value="Prokaryotic type KH domain (KH-domain type II)"/>
    <property type="match status" value="1"/>
</dbReference>
<dbReference type="SUPFAM" id="SSF54821">
    <property type="entry name" value="Ribosomal protein S3 C-terminal domain"/>
    <property type="match status" value="1"/>
</dbReference>
<dbReference type="PROSITE" id="PS50823">
    <property type="entry name" value="KH_TYPE_2"/>
    <property type="match status" value="1"/>
</dbReference>
<dbReference type="PROSITE" id="PS00548">
    <property type="entry name" value="RIBOSOMAL_S3"/>
    <property type="match status" value="1"/>
</dbReference>
<comment type="subunit">
    <text evidence="1">Part of the 30S ribosomal subunit.</text>
</comment>
<comment type="subcellular location">
    <subcellularLocation>
        <location>Plastid</location>
        <location>Chloroplast</location>
    </subcellularLocation>
</comment>
<comment type="similarity">
    <text evidence="2">Belongs to the universal ribosomal protein uS3 family.</text>
</comment>
<evidence type="ECO:0000250" key="1"/>
<evidence type="ECO:0000305" key="2"/>
<feature type="chain" id="PRO_0000293946" description="Small ribosomal subunit protein uS3c">
    <location>
        <begin position="1"/>
        <end position="218"/>
    </location>
</feature>
<feature type="domain" description="KH type-2">
    <location>
        <begin position="47"/>
        <end position="118"/>
    </location>
</feature>